<evidence type="ECO:0000255" key="1">
    <source>
        <dbReference type="HAMAP-Rule" id="MF_00101"/>
    </source>
</evidence>
<keyword id="KW-0963">Cytoplasm</keyword>
<keyword id="KW-0275">Fatty acid biosynthesis</keyword>
<keyword id="KW-0276">Fatty acid metabolism</keyword>
<keyword id="KW-0444">Lipid biosynthesis</keyword>
<keyword id="KW-0443">Lipid metabolism</keyword>
<keyword id="KW-0460">Magnesium</keyword>
<keyword id="KW-0479">Metal-binding</keyword>
<keyword id="KW-0808">Transferase</keyword>
<protein>
    <recommendedName>
        <fullName evidence="1">Holo-[acyl-carrier-protein] synthase</fullName>
        <shortName evidence="1">Holo-ACP synthase</shortName>
        <ecNumber evidence="1">2.7.8.7</ecNumber>
    </recommendedName>
    <alternativeName>
        <fullName evidence="1">4'-phosphopantetheinyl transferase AcpS</fullName>
    </alternativeName>
</protein>
<feature type="chain" id="PRO_1000008453" description="Holo-[acyl-carrier-protein] synthase">
    <location>
        <begin position="1"/>
        <end position="110"/>
    </location>
</feature>
<feature type="binding site" evidence="1">
    <location>
        <position position="8"/>
    </location>
    <ligand>
        <name>Mg(2+)</name>
        <dbReference type="ChEBI" id="CHEBI:18420"/>
    </ligand>
</feature>
<feature type="binding site" evidence="1">
    <location>
        <position position="54"/>
    </location>
    <ligand>
        <name>Mg(2+)</name>
        <dbReference type="ChEBI" id="CHEBI:18420"/>
    </ligand>
</feature>
<gene>
    <name evidence="1" type="primary">acpS</name>
    <name type="ordered locus">MCAP_0400</name>
</gene>
<sequence>MINNVGIDIVENKRIKLKEEFIVKVLSANEIKTFNIKNKKQKREFLAGRWAIKEAIIKTLDQPISMNKIDIEYINDKPVIKNQELQNILISISHEKKYAVGIALKQCDNK</sequence>
<proteinExistence type="inferred from homology"/>
<dbReference type="EC" id="2.7.8.7" evidence="1"/>
<dbReference type="EMBL" id="CP000123">
    <property type="protein sequence ID" value="ABC01142.1"/>
    <property type="molecule type" value="Genomic_DNA"/>
</dbReference>
<dbReference type="RefSeq" id="WP_011387280.1">
    <property type="nucleotide sequence ID" value="NC_007633.1"/>
</dbReference>
<dbReference type="SMR" id="Q2SS83"/>
<dbReference type="GeneID" id="23778645"/>
<dbReference type="KEGG" id="mcp:MCAP_0400"/>
<dbReference type="HOGENOM" id="CLU_089696_1_1_14"/>
<dbReference type="PhylomeDB" id="Q2SS83"/>
<dbReference type="Proteomes" id="UP000001928">
    <property type="component" value="Chromosome"/>
</dbReference>
<dbReference type="GO" id="GO:0005737">
    <property type="term" value="C:cytoplasm"/>
    <property type="evidence" value="ECO:0007669"/>
    <property type="project" value="UniProtKB-SubCell"/>
</dbReference>
<dbReference type="GO" id="GO:0008897">
    <property type="term" value="F:holo-[acyl-carrier-protein] synthase activity"/>
    <property type="evidence" value="ECO:0007669"/>
    <property type="project" value="UniProtKB-UniRule"/>
</dbReference>
<dbReference type="GO" id="GO:0000287">
    <property type="term" value="F:magnesium ion binding"/>
    <property type="evidence" value="ECO:0007669"/>
    <property type="project" value="UniProtKB-UniRule"/>
</dbReference>
<dbReference type="GO" id="GO:0006633">
    <property type="term" value="P:fatty acid biosynthetic process"/>
    <property type="evidence" value="ECO:0007669"/>
    <property type="project" value="UniProtKB-UniRule"/>
</dbReference>
<dbReference type="Gene3D" id="3.90.470.20">
    <property type="entry name" value="4'-phosphopantetheinyl transferase domain"/>
    <property type="match status" value="1"/>
</dbReference>
<dbReference type="HAMAP" id="MF_00101">
    <property type="entry name" value="AcpS"/>
    <property type="match status" value="1"/>
</dbReference>
<dbReference type="InterPro" id="IPR008278">
    <property type="entry name" value="4-PPantetheinyl_Trfase_dom"/>
</dbReference>
<dbReference type="InterPro" id="IPR037143">
    <property type="entry name" value="4-PPantetheinyl_Trfase_dom_sf"/>
</dbReference>
<dbReference type="InterPro" id="IPR002582">
    <property type="entry name" value="ACPS"/>
</dbReference>
<dbReference type="InterPro" id="IPR004568">
    <property type="entry name" value="Ppantetheine-prot_Trfase_dom"/>
</dbReference>
<dbReference type="NCBIfam" id="TIGR00556">
    <property type="entry name" value="pantethn_trn"/>
    <property type="match status" value="1"/>
</dbReference>
<dbReference type="Pfam" id="PF01648">
    <property type="entry name" value="ACPS"/>
    <property type="match status" value="1"/>
</dbReference>
<dbReference type="SUPFAM" id="SSF56214">
    <property type="entry name" value="4'-phosphopantetheinyl transferase"/>
    <property type="match status" value="1"/>
</dbReference>
<accession>Q2SS83</accession>
<comment type="function">
    <text evidence="1">Transfers the 4'-phosphopantetheine moiety from coenzyme A to a Ser of acyl-carrier-protein.</text>
</comment>
<comment type="catalytic activity">
    <reaction evidence="1">
        <text>apo-[ACP] + CoA = holo-[ACP] + adenosine 3',5'-bisphosphate + H(+)</text>
        <dbReference type="Rhea" id="RHEA:12068"/>
        <dbReference type="Rhea" id="RHEA-COMP:9685"/>
        <dbReference type="Rhea" id="RHEA-COMP:9690"/>
        <dbReference type="ChEBI" id="CHEBI:15378"/>
        <dbReference type="ChEBI" id="CHEBI:29999"/>
        <dbReference type="ChEBI" id="CHEBI:57287"/>
        <dbReference type="ChEBI" id="CHEBI:58343"/>
        <dbReference type="ChEBI" id="CHEBI:64479"/>
        <dbReference type="EC" id="2.7.8.7"/>
    </reaction>
</comment>
<comment type="cofactor">
    <cofactor evidence="1">
        <name>Mg(2+)</name>
        <dbReference type="ChEBI" id="CHEBI:18420"/>
    </cofactor>
</comment>
<comment type="subcellular location">
    <subcellularLocation>
        <location evidence="1">Cytoplasm</location>
    </subcellularLocation>
</comment>
<comment type="similarity">
    <text evidence="1">Belongs to the P-Pant transferase superfamily. AcpS family.</text>
</comment>
<name>ACPS_MYCCT</name>
<organism>
    <name type="scientific">Mycoplasma capricolum subsp. capricolum (strain California kid / ATCC 27343 / NCTC 10154)</name>
    <dbReference type="NCBI Taxonomy" id="340047"/>
    <lineage>
        <taxon>Bacteria</taxon>
        <taxon>Bacillati</taxon>
        <taxon>Mycoplasmatota</taxon>
        <taxon>Mollicutes</taxon>
        <taxon>Mycoplasmataceae</taxon>
        <taxon>Mycoplasma</taxon>
    </lineage>
</organism>
<reference key="1">
    <citation type="submission" date="2005-09" db="EMBL/GenBank/DDBJ databases">
        <authorList>
            <person name="Glass J.I."/>
            <person name="Lartigue C."/>
            <person name="Pfannkoch C."/>
            <person name="Baden-Tillson H."/>
            <person name="Smith H.O."/>
            <person name="Venter J.C."/>
            <person name="Roske K."/>
            <person name="Wise K.S."/>
            <person name="Calcutt M.J."/>
            <person name="Nelson W.C."/>
            <person name="Nierman W.C."/>
        </authorList>
    </citation>
    <scope>NUCLEOTIDE SEQUENCE [LARGE SCALE GENOMIC DNA]</scope>
    <source>
        <strain>California kid / ATCC 27343 / NCTC 10154</strain>
    </source>
</reference>